<comment type="catalytic activity">
    <reaction evidence="1">
        <text>(6R)-10-formyltetrahydrofolate + 5-amino-1-(5-phospho-beta-D-ribosyl)imidazole-4-carboxamide = 5-formamido-1-(5-phospho-D-ribosyl)imidazole-4-carboxamide + (6S)-5,6,7,8-tetrahydrofolate</text>
        <dbReference type="Rhea" id="RHEA:22192"/>
        <dbReference type="ChEBI" id="CHEBI:57453"/>
        <dbReference type="ChEBI" id="CHEBI:58467"/>
        <dbReference type="ChEBI" id="CHEBI:58475"/>
        <dbReference type="ChEBI" id="CHEBI:195366"/>
        <dbReference type="EC" id="2.1.2.3"/>
    </reaction>
</comment>
<comment type="catalytic activity">
    <reaction evidence="1">
        <text>IMP + H2O = 5-formamido-1-(5-phospho-D-ribosyl)imidazole-4-carboxamide</text>
        <dbReference type="Rhea" id="RHEA:18445"/>
        <dbReference type="ChEBI" id="CHEBI:15377"/>
        <dbReference type="ChEBI" id="CHEBI:58053"/>
        <dbReference type="ChEBI" id="CHEBI:58467"/>
        <dbReference type="EC" id="3.5.4.10"/>
    </reaction>
</comment>
<comment type="pathway">
    <text evidence="1">Purine metabolism; IMP biosynthesis via de novo pathway; 5-formamido-1-(5-phospho-D-ribosyl)imidazole-4-carboxamide from 5-amino-1-(5-phospho-D-ribosyl)imidazole-4-carboxamide (10-formyl THF route): step 1/1.</text>
</comment>
<comment type="pathway">
    <text evidence="1">Purine metabolism; IMP biosynthesis via de novo pathway; IMP from 5-formamido-1-(5-phospho-D-ribosyl)imidazole-4-carboxamide: step 1/1.</text>
</comment>
<comment type="domain">
    <text evidence="1">The IMP cyclohydrolase activity resides in the N-terminal region.</text>
</comment>
<comment type="similarity">
    <text evidence="1">Belongs to the PurH family.</text>
</comment>
<organism>
    <name type="scientific">Pelodictyon phaeoclathratiforme (strain DSM 5477 / BU-1)</name>
    <dbReference type="NCBI Taxonomy" id="324925"/>
    <lineage>
        <taxon>Bacteria</taxon>
        <taxon>Pseudomonadati</taxon>
        <taxon>Chlorobiota</taxon>
        <taxon>Chlorobiia</taxon>
        <taxon>Chlorobiales</taxon>
        <taxon>Chlorobiaceae</taxon>
        <taxon>Chlorobium/Pelodictyon group</taxon>
        <taxon>Pelodictyon</taxon>
    </lineage>
</organism>
<accession>B4SDT6</accession>
<reference key="1">
    <citation type="submission" date="2008-06" db="EMBL/GenBank/DDBJ databases">
        <title>Complete sequence of Pelodictyon phaeoclathratiforme BU-1.</title>
        <authorList>
            <consortium name="US DOE Joint Genome Institute"/>
            <person name="Lucas S."/>
            <person name="Copeland A."/>
            <person name="Lapidus A."/>
            <person name="Glavina del Rio T."/>
            <person name="Dalin E."/>
            <person name="Tice H."/>
            <person name="Bruce D."/>
            <person name="Goodwin L."/>
            <person name="Pitluck S."/>
            <person name="Schmutz J."/>
            <person name="Larimer F."/>
            <person name="Land M."/>
            <person name="Hauser L."/>
            <person name="Kyrpides N."/>
            <person name="Mikhailova N."/>
            <person name="Liu Z."/>
            <person name="Li T."/>
            <person name="Zhao F."/>
            <person name="Overmann J."/>
            <person name="Bryant D.A."/>
            <person name="Richardson P."/>
        </authorList>
    </citation>
    <scope>NUCLEOTIDE SEQUENCE [LARGE SCALE GENOMIC DNA]</scope>
    <source>
        <strain>DSM 5477 / BU-1</strain>
    </source>
</reference>
<keyword id="KW-0378">Hydrolase</keyword>
<keyword id="KW-0511">Multifunctional enzyme</keyword>
<keyword id="KW-0658">Purine biosynthesis</keyword>
<keyword id="KW-1185">Reference proteome</keyword>
<keyword id="KW-0808">Transferase</keyword>
<feature type="chain" id="PRO_1000096079" description="Bifunctional purine biosynthesis protein PurH">
    <location>
        <begin position="1"/>
        <end position="525"/>
    </location>
</feature>
<feature type="domain" description="MGS-like" evidence="2">
    <location>
        <begin position="1"/>
        <end position="149"/>
    </location>
</feature>
<evidence type="ECO:0000255" key="1">
    <source>
        <dbReference type="HAMAP-Rule" id="MF_00139"/>
    </source>
</evidence>
<evidence type="ECO:0000255" key="2">
    <source>
        <dbReference type="PROSITE-ProRule" id="PRU01202"/>
    </source>
</evidence>
<protein>
    <recommendedName>
        <fullName evidence="1">Bifunctional purine biosynthesis protein PurH</fullName>
    </recommendedName>
    <domain>
        <recommendedName>
            <fullName evidence="1">Phosphoribosylaminoimidazolecarboxamide formyltransferase</fullName>
            <ecNumber evidence="1">2.1.2.3</ecNumber>
        </recommendedName>
        <alternativeName>
            <fullName evidence="1">AICAR transformylase</fullName>
        </alternativeName>
    </domain>
    <domain>
        <recommendedName>
            <fullName evidence="1">IMP cyclohydrolase</fullName>
            <ecNumber evidence="1">3.5.4.10</ecNumber>
        </recommendedName>
        <alternativeName>
            <fullName evidence="1">ATIC</fullName>
        </alternativeName>
        <alternativeName>
            <fullName evidence="1">IMP synthase</fullName>
        </alternativeName>
        <alternativeName>
            <fullName evidence="1">Inosinicase</fullName>
        </alternativeName>
    </domain>
</protein>
<sequence>MSDPVIKRALVSVSDKTGIVEFCRELSGMGVEIFSTGGTLKSLQDSGVSASSISTITGFPEIMDGRVKTLHPKIHGGLLAVRENPEHVKQATENGISFIDLVVVNLYPFEATVARPDVTFEDAIENIDIGGPSMLRSAAKNNESVTVVTDSADYALVLQEMREHNGATKRTTRLTLALKVFELTSRYDRAIASYLAGAVAGEQQGAASKMTVTLERELDMRYGENPHQSAGLYRLTDENGTRSFGDFFEKLHGKELSYNNMLDIAAAVSLIEEFRGEEPTVVIVKHTNPCGVAQAPTLAEAYRRAFSTDTQAPFGGIISFNRPLDMEAAKAVNEIFTEILIAPAFEDGVLEMLMKKKDRRLVLQTNALPKGGWEFKSTPFGMLVQERDSKIVAKEDLTVVTKRQPTEEEIADLMFAWKICKHIKSNTILYVKNRQTYGVGAGQMSRVDSSKIARWKASEVSLDLHGSVVASDAFFPFADGLLAAAEAGVTAVIQPGGSIRDNEVIEAADANNLAMVFTGMRHFKH</sequence>
<dbReference type="EC" id="2.1.2.3" evidence="1"/>
<dbReference type="EC" id="3.5.4.10" evidence="1"/>
<dbReference type="EMBL" id="CP001110">
    <property type="protein sequence ID" value="ACF44454.1"/>
    <property type="molecule type" value="Genomic_DNA"/>
</dbReference>
<dbReference type="RefSeq" id="WP_012508930.1">
    <property type="nucleotide sequence ID" value="NC_011060.1"/>
</dbReference>
<dbReference type="SMR" id="B4SDT6"/>
<dbReference type="STRING" id="324925.Ppha_2259"/>
<dbReference type="KEGG" id="pph:Ppha_2259"/>
<dbReference type="eggNOG" id="COG0138">
    <property type="taxonomic scope" value="Bacteria"/>
</dbReference>
<dbReference type="HOGENOM" id="CLU_016316_5_2_10"/>
<dbReference type="OrthoDB" id="9802065at2"/>
<dbReference type="UniPathway" id="UPA00074">
    <property type="reaction ID" value="UER00133"/>
</dbReference>
<dbReference type="UniPathway" id="UPA00074">
    <property type="reaction ID" value="UER00135"/>
</dbReference>
<dbReference type="Proteomes" id="UP000002724">
    <property type="component" value="Chromosome"/>
</dbReference>
<dbReference type="GO" id="GO:0005829">
    <property type="term" value="C:cytosol"/>
    <property type="evidence" value="ECO:0007669"/>
    <property type="project" value="TreeGrafter"/>
</dbReference>
<dbReference type="GO" id="GO:0003937">
    <property type="term" value="F:IMP cyclohydrolase activity"/>
    <property type="evidence" value="ECO:0007669"/>
    <property type="project" value="UniProtKB-UniRule"/>
</dbReference>
<dbReference type="GO" id="GO:0004643">
    <property type="term" value="F:phosphoribosylaminoimidazolecarboxamide formyltransferase activity"/>
    <property type="evidence" value="ECO:0007669"/>
    <property type="project" value="UniProtKB-UniRule"/>
</dbReference>
<dbReference type="GO" id="GO:0006189">
    <property type="term" value="P:'de novo' IMP biosynthetic process"/>
    <property type="evidence" value="ECO:0007669"/>
    <property type="project" value="UniProtKB-UniRule"/>
</dbReference>
<dbReference type="CDD" id="cd01421">
    <property type="entry name" value="IMPCH"/>
    <property type="match status" value="1"/>
</dbReference>
<dbReference type="FunFam" id="3.40.140.20:FF:000001">
    <property type="entry name" value="Bifunctional purine biosynthesis protein PurH"/>
    <property type="match status" value="1"/>
</dbReference>
<dbReference type="FunFam" id="3.40.50.1380:FF:000001">
    <property type="entry name" value="Bifunctional purine biosynthesis protein PurH"/>
    <property type="match status" value="1"/>
</dbReference>
<dbReference type="Gene3D" id="3.40.140.20">
    <property type="match status" value="2"/>
</dbReference>
<dbReference type="Gene3D" id="3.40.50.1380">
    <property type="entry name" value="Methylglyoxal synthase-like domain"/>
    <property type="match status" value="1"/>
</dbReference>
<dbReference type="HAMAP" id="MF_00139">
    <property type="entry name" value="PurH"/>
    <property type="match status" value="1"/>
</dbReference>
<dbReference type="InterPro" id="IPR024051">
    <property type="entry name" value="AICAR_Tfase_dup_dom_sf"/>
</dbReference>
<dbReference type="InterPro" id="IPR016193">
    <property type="entry name" value="Cytidine_deaminase-like"/>
</dbReference>
<dbReference type="InterPro" id="IPR011607">
    <property type="entry name" value="MGS-like_dom"/>
</dbReference>
<dbReference type="InterPro" id="IPR036914">
    <property type="entry name" value="MGS-like_dom_sf"/>
</dbReference>
<dbReference type="InterPro" id="IPR002695">
    <property type="entry name" value="PurH-like"/>
</dbReference>
<dbReference type="NCBIfam" id="NF002049">
    <property type="entry name" value="PRK00881.1"/>
    <property type="match status" value="1"/>
</dbReference>
<dbReference type="NCBIfam" id="TIGR00355">
    <property type="entry name" value="purH"/>
    <property type="match status" value="1"/>
</dbReference>
<dbReference type="PANTHER" id="PTHR11692:SF0">
    <property type="entry name" value="BIFUNCTIONAL PURINE BIOSYNTHESIS PROTEIN ATIC"/>
    <property type="match status" value="1"/>
</dbReference>
<dbReference type="PANTHER" id="PTHR11692">
    <property type="entry name" value="BIFUNCTIONAL PURINE BIOSYNTHESIS PROTEIN PURH"/>
    <property type="match status" value="1"/>
</dbReference>
<dbReference type="Pfam" id="PF01808">
    <property type="entry name" value="AICARFT_IMPCHas"/>
    <property type="match status" value="1"/>
</dbReference>
<dbReference type="Pfam" id="PF02142">
    <property type="entry name" value="MGS"/>
    <property type="match status" value="1"/>
</dbReference>
<dbReference type="PIRSF" id="PIRSF000414">
    <property type="entry name" value="AICARFT_IMPCHas"/>
    <property type="match status" value="1"/>
</dbReference>
<dbReference type="SMART" id="SM00798">
    <property type="entry name" value="AICARFT_IMPCHas"/>
    <property type="match status" value="1"/>
</dbReference>
<dbReference type="SMART" id="SM00851">
    <property type="entry name" value="MGS"/>
    <property type="match status" value="1"/>
</dbReference>
<dbReference type="SUPFAM" id="SSF53927">
    <property type="entry name" value="Cytidine deaminase-like"/>
    <property type="match status" value="1"/>
</dbReference>
<dbReference type="SUPFAM" id="SSF52335">
    <property type="entry name" value="Methylglyoxal synthase-like"/>
    <property type="match status" value="1"/>
</dbReference>
<dbReference type="PROSITE" id="PS51855">
    <property type="entry name" value="MGS"/>
    <property type="match status" value="1"/>
</dbReference>
<gene>
    <name evidence="1" type="primary">purH</name>
    <name type="ordered locus">Ppha_2259</name>
</gene>
<proteinExistence type="inferred from homology"/>
<name>PUR9_PELPB</name>